<sequence length="547" mass="60681">MDPMELRNVNIEPDDESSSGESVPDSYIGIGNSEKAAMSSQFANEDAESQKFLTNGFLGKKKLADYGDEHHPGTTSFGMSSFNLSNAIMGSGILGLSYAMANTGIILFIIMLLAVAILSLYSVHLLLKTAKEGGSLIYEKLGEKAFGWPGKIGAFISITMQNIGAMSSYLFIIKYELPEVIRAFMGLEENTGEWYPNGNYLIVFVSLGIILPLSLLKNLGYLGYTSGFSLTCMVFFVSVVIYKKFQIPCPLPVLDHSVGNLSFNNTLSMHVVMLPNNSESSDVNFMMDYTHRNPAGLDENKAKGSLHDSGVEYEAHSDDKCQPKYFVFNSRTAYAIPILAFAFVCHPEVLPIYSELKDRSRRKMQTVSNISITGMLVMYLLAALFGYLTFYGEVEDELLHAYSKVYTFDIPLLMVRLAVLVAVTLTVPIVLFPIRTSVTTLLFPKRPFSWIRHFLIAAVLIALNNVLVILVPTIKYIFGFIGASSATMLIFILPAVFYLKLVKKESFRSPQKVGALIFLVVGIIFMIGSMALIIIDWIYDPPNSKHH</sequence>
<protein>
    <recommendedName>
        <fullName evidence="2">Sodium-coupled neutral amino acid transporter 4</fullName>
    </recommendedName>
    <alternativeName>
        <fullName>Amino acid transporter A3</fullName>
    </alternativeName>
    <alternativeName>
        <fullName>Na(+)-coupled neutral amino acid transporter 4</fullName>
    </alternativeName>
    <alternativeName>
        <fullName>Solute carrier family 38 member 4</fullName>
    </alternativeName>
    <alternativeName>
        <fullName>System A amino acid transporter 3</fullName>
    </alternativeName>
</protein>
<dbReference type="EMBL" id="CR857647">
    <property type="protein sequence ID" value="CAH89920.1"/>
    <property type="molecule type" value="mRNA"/>
</dbReference>
<dbReference type="RefSeq" id="NP_001129012.1">
    <property type="nucleotide sequence ID" value="NM_001135540.1"/>
</dbReference>
<dbReference type="SMR" id="Q5RE87"/>
<dbReference type="FunCoup" id="Q5RE87">
    <property type="interactions" value="44"/>
</dbReference>
<dbReference type="STRING" id="9601.ENSPPYP00000005067"/>
<dbReference type="GlyCosmos" id="Q5RE87">
    <property type="glycosylation" value="3 sites, No reported glycans"/>
</dbReference>
<dbReference type="GeneID" id="100190852"/>
<dbReference type="KEGG" id="pon:100190852"/>
<dbReference type="CTD" id="55089"/>
<dbReference type="eggNOG" id="KOG1305">
    <property type="taxonomic scope" value="Eukaryota"/>
</dbReference>
<dbReference type="InParanoid" id="Q5RE87"/>
<dbReference type="OrthoDB" id="655540at2759"/>
<dbReference type="Proteomes" id="UP000001595">
    <property type="component" value="Unplaced"/>
</dbReference>
<dbReference type="GO" id="GO:0031528">
    <property type="term" value="C:microvillus membrane"/>
    <property type="evidence" value="ECO:0000250"/>
    <property type="project" value="UniProtKB"/>
</dbReference>
<dbReference type="GO" id="GO:0015655">
    <property type="term" value="F:alanine:sodium symporter activity"/>
    <property type="evidence" value="ECO:0000250"/>
    <property type="project" value="UniProtKB"/>
</dbReference>
<dbReference type="GO" id="GO:0061459">
    <property type="term" value="F:L-arginine transmembrane transporter activity"/>
    <property type="evidence" value="ECO:0000250"/>
    <property type="project" value="UniProtKB"/>
</dbReference>
<dbReference type="GO" id="GO:0005295">
    <property type="term" value="F:neutral L-amino acid:sodium symporter activity"/>
    <property type="evidence" value="ECO:0000250"/>
    <property type="project" value="UniProtKB"/>
</dbReference>
<dbReference type="GO" id="GO:1904273">
    <property type="term" value="P:L-alanine import across plasma membrane"/>
    <property type="evidence" value="ECO:0000250"/>
    <property type="project" value="UniProtKB"/>
</dbReference>
<dbReference type="GO" id="GO:1904557">
    <property type="term" value="P:L-alanine transmembrane transport"/>
    <property type="evidence" value="ECO:0000250"/>
    <property type="project" value="UniProtKB"/>
</dbReference>
<dbReference type="GO" id="GO:1903826">
    <property type="term" value="P:L-arginine transmembrane transport"/>
    <property type="evidence" value="ECO:0000250"/>
    <property type="project" value="UniProtKB"/>
</dbReference>
<dbReference type="GO" id="GO:0015804">
    <property type="term" value="P:neutral amino acid transport"/>
    <property type="evidence" value="ECO:0000250"/>
    <property type="project" value="UniProtKB"/>
</dbReference>
<dbReference type="InterPro" id="IPR013057">
    <property type="entry name" value="AA_transpt_TM"/>
</dbReference>
<dbReference type="PANTHER" id="PTHR22950">
    <property type="entry name" value="AMINO ACID TRANSPORTER"/>
    <property type="match status" value="1"/>
</dbReference>
<dbReference type="PANTHER" id="PTHR22950:SF222">
    <property type="entry name" value="SODIUM-COUPLED NEUTRAL AMINO ACID TRANSPORTER 4"/>
    <property type="match status" value="1"/>
</dbReference>
<dbReference type="Pfam" id="PF01490">
    <property type="entry name" value="Aa_trans"/>
    <property type="match status" value="2"/>
</dbReference>
<comment type="function">
    <text evidence="3">Symporter that cotransports neutral amino acids and sodium ions from the extraccellular to the intracellular side of the cell membrane. The transport is electrogenic, pH dependent and partially tolerates substitution of Na(+) by Li(+). Preferentially transports smaller amino acids, such as glycine, L-alanine, L-serine, L-asparagine and L-threonine, followed by L-cysteine, L-histidine, L-proline and L-glutamine and L-methionine.</text>
</comment>
<comment type="catalytic activity">
    <reaction evidence="2">
        <text>L-methionine(in) + Na(+)(in) = L-methionine(out) + Na(+)(out)</text>
        <dbReference type="Rhea" id="RHEA:68240"/>
        <dbReference type="ChEBI" id="CHEBI:29101"/>
        <dbReference type="ChEBI" id="CHEBI:57844"/>
    </reaction>
    <physiologicalReaction direction="right-to-left" evidence="2">
        <dbReference type="Rhea" id="RHEA:68242"/>
    </physiologicalReaction>
</comment>
<comment type="catalytic activity">
    <reaction evidence="2">
        <text>L-asparagine(in) + Na(+)(in) = L-asparagine(out) + Na(+)(out)</text>
        <dbReference type="Rhea" id="RHEA:71383"/>
        <dbReference type="ChEBI" id="CHEBI:29101"/>
        <dbReference type="ChEBI" id="CHEBI:58048"/>
    </reaction>
    <physiologicalReaction direction="right-to-left" evidence="2">
        <dbReference type="Rhea" id="RHEA:71385"/>
    </physiologicalReaction>
</comment>
<comment type="catalytic activity">
    <reaction evidence="2">
        <text>L-threonine(in) + Na(+)(in) = L-threonine(out) + Na(+)(out)</text>
        <dbReference type="Rhea" id="RHEA:69999"/>
        <dbReference type="ChEBI" id="CHEBI:29101"/>
        <dbReference type="ChEBI" id="CHEBI:57926"/>
    </reaction>
    <physiologicalReaction direction="right-to-left" evidence="2">
        <dbReference type="Rhea" id="RHEA:70001"/>
    </physiologicalReaction>
</comment>
<comment type="catalytic activity">
    <reaction evidence="2">
        <text>L-serine(in) + Na(+)(in) = L-serine(out) + Na(+)(out)</text>
        <dbReference type="Rhea" id="RHEA:29575"/>
        <dbReference type="ChEBI" id="CHEBI:29101"/>
        <dbReference type="ChEBI" id="CHEBI:33384"/>
    </reaction>
    <physiologicalReaction direction="right-to-left" evidence="2">
        <dbReference type="Rhea" id="RHEA:29577"/>
    </physiologicalReaction>
</comment>
<comment type="catalytic activity">
    <reaction evidence="2">
        <text>glycine(in) + Na(+)(in) = glycine(out) + Na(+)(out)</text>
        <dbReference type="Rhea" id="RHEA:68228"/>
        <dbReference type="ChEBI" id="CHEBI:29101"/>
        <dbReference type="ChEBI" id="CHEBI:57305"/>
    </reaction>
    <physiologicalReaction direction="right-to-left" evidence="2">
        <dbReference type="Rhea" id="RHEA:68230"/>
    </physiologicalReaction>
</comment>
<comment type="catalytic activity">
    <reaction evidence="2">
        <text>L-alanine(in) + Na(+)(in) = L-alanine(out) + Na(+)(out)</text>
        <dbReference type="Rhea" id="RHEA:29283"/>
        <dbReference type="ChEBI" id="CHEBI:29101"/>
        <dbReference type="ChEBI" id="CHEBI:57972"/>
    </reaction>
    <physiologicalReaction direction="right-to-left" evidence="2">
        <dbReference type="Rhea" id="RHEA:29285"/>
    </physiologicalReaction>
</comment>
<comment type="catalytic activity">
    <reaction evidence="2">
        <text>L-glutamine(in) + Na(+)(in) = L-glutamine(out) + Na(+)(out)</text>
        <dbReference type="Rhea" id="RHEA:68236"/>
        <dbReference type="ChEBI" id="CHEBI:29101"/>
        <dbReference type="ChEBI" id="CHEBI:58359"/>
    </reaction>
    <physiologicalReaction direction="right-to-left" evidence="2">
        <dbReference type="Rhea" id="RHEA:68238"/>
    </physiologicalReaction>
</comment>
<comment type="catalytic activity">
    <reaction evidence="2">
        <text>L-histidine(in) + Na(+)(in) = L-histidine(out) + Na(+)(out)</text>
        <dbReference type="Rhea" id="RHEA:71583"/>
        <dbReference type="ChEBI" id="CHEBI:29101"/>
        <dbReference type="ChEBI" id="CHEBI:57595"/>
    </reaction>
    <physiologicalReaction direction="right-to-left" evidence="2">
        <dbReference type="Rhea" id="RHEA:71585"/>
    </physiologicalReaction>
</comment>
<comment type="catalytic activity">
    <reaction evidence="3">
        <text>L-cysteine(in) + Na(+)(in) = L-cysteine(out) + Na(+)(out)</text>
        <dbReference type="Rhea" id="RHEA:68232"/>
        <dbReference type="ChEBI" id="CHEBI:29101"/>
        <dbReference type="ChEBI" id="CHEBI:35235"/>
    </reaction>
    <physiologicalReaction direction="right-to-left" evidence="3">
        <dbReference type="Rhea" id="RHEA:68234"/>
    </physiologicalReaction>
</comment>
<comment type="catalytic activity">
    <reaction evidence="3">
        <text>L-proline(in) + Na(+)(in) = L-proline(out) + Na(+)(out)</text>
        <dbReference type="Rhea" id="RHEA:28967"/>
        <dbReference type="ChEBI" id="CHEBI:29101"/>
        <dbReference type="ChEBI" id="CHEBI:60039"/>
    </reaction>
    <physiologicalReaction direction="right-to-left" evidence="3">
        <dbReference type="Rhea" id="RHEA:28969"/>
    </physiologicalReaction>
</comment>
<comment type="subcellular location">
    <subcellularLocation>
        <location evidence="2">Cell membrane</location>
        <topology evidence="2">Multi-pass membrane protein</topology>
    </subcellularLocation>
    <subcellularLocation>
        <location evidence="2">Cell projection</location>
        <location evidence="2">Microvillus membrane</location>
        <topology evidence="2">Multi-pass membrane protein</topology>
    </subcellularLocation>
    <text evidence="2">Microvillus membrane localization in placenta.</text>
</comment>
<comment type="PTM">
    <text evidence="1">The disulfide bond plays an important role in substrate transport, but has no effect on trafficking to the cell surface.</text>
</comment>
<comment type="similarity">
    <text evidence="6">Belongs to the amino acid/polyamine transporter 2 family.</text>
</comment>
<comment type="caution">
    <text evidence="2">There is a disagreement about sodium-independent transport of cationic amino acids, such as L-arginine and L-lysine (By similarity). While Hatanaka et al. shown that SLC38A4 may mediate sodium-independent transport of cationic amino acids, such as L-arginine and L-lysine (By similarity). Recent studies by Fairweather et al., using quantitative LC-MS analysis, shown any transport activity of cationic amino acids, such as L-arginine and L-lysine (By similarity).</text>
</comment>
<evidence type="ECO:0000250" key="1">
    <source>
        <dbReference type="UniProtKB" id="Q8R1S9"/>
    </source>
</evidence>
<evidence type="ECO:0000250" key="2">
    <source>
        <dbReference type="UniProtKB" id="Q969I6"/>
    </source>
</evidence>
<evidence type="ECO:0000250" key="3">
    <source>
        <dbReference type="UniProtKB" id="Q9EQ25"/>
    </source>
</evidence>
<evidence type="ECO:0000255" key="4"/>
<evidence type="ECO:0000256" key="5">
    <source>
        <dbReference type="SAM" id="MobiDB-lite"/>
    </source>
</evidence>
<evidence type="ECO:0000305" key="6"/>
<reference key="1">
    <citation type="submission" date="2004-11" db="EMBL/GenBank/DDBJ databases">
        <authorList>
            <consortium name="The German cDNA consortium"/>
        </authorList>
    </citation>
    <scope>NUCLEOTIDE SEQUENCE [LARGE SCALE MRNA]</scope>
    <source>
        <tissue>Kidney</tissue>
    </source>
</reference>
<name>S38A4_PONAB</name>
<keyword id="KW-0029">Amino-acid transport</keyword>
<keyword id="KW-1003">Cell membrane</keyword>
<keyword id="KW-0966">Cell projection</keyword>
<keyword id="KW-1015">Disulfide bond</keyword>
<keyword id="KW-0325">Glycoprotein</keyword>
<keyword id="KW-0406">Ion transport</keyword>
<keyword id="KW-0472">Membrane</keyword>
<keyword id="KW-0597">Phosphoprotein</keyword>
<keyword id="KW-1185">Reference proteome</keyword>
<keyword id="KW-0915">Sodium</keyword>
<keyword id="KW-0739">Sodium transport</keyword>
<keyword id="KW-0769">Symport</keyword>
<keyword id="KW-0812">Transmembrane</keyword>
<keyword id="KW-1133">Transmembrane helix</keyword>
<keyword id="KW-0813">Transport</keyword>
<feature type="chain" id="PRO_0000247862" description="Sodium-coupled neutral amino acid transporter 4">
    <location>
        <begin position="1"/>
        <end position="547"/>
    </location>
</feature>
<feature type="topological domain" description="Extracellular" evidence="2 4">
    <location>
        <begin position="1"/>
        <end position="104"/>
    </location>
</feature>
<feature type="transmembrane region" description="Helical" evidence="4">
    <location>
        <begin position="105"/>
        <end position="125"/>
    </location>
</feature>
<feature type="topological domain" description="Cytoplasmic" evidence="2 4">
    <location>
        <begin position="126"/>
        <end position="151"/>
    </location>
</feature>
<feature type="transmembrane region" description="Helical" evidence="4">
    <location>
        <begin position="152"/>
        <end position="172"/>
    </location>
</feature>
<feature type="topological domain" description="Extracellular" evidence="2 4">
    <location>
        <begin position="173"/>
        <end position="195"/>
    </location>
</feature>
<feature type="transmembrane region" description="Helical" evidence="4">
    <location>
        <begin position="196"/>
        <end position="216"/>
    </location>
</feature>
<feature type="topological domain" description="Cytoplasmic" evidence="2 4">
    <location>
        <begin position="217"/>
        <end position="220"/>
    </location>
</feature>
<feature type="transmembrane region" description="Helical" evidence="4">
    <location>
        <begin position="221"/>
        <end position="241"/>
    </location>
</feature>
<feature type="topological domain" description="Extracellular" evidence="2 4">
    <location>
        <begin position="242"/>
        <end position="332"/>
    </location>
</feature>
<feature type="transmembrane region" description="Helical" evidence="4">
    <location>
        <begin position="333"/>
        <end position="353"/>
    </location>
</feature>
<feature type="topological domain" description="Cytoplasmic" evidence="2 4">
    <location>
        <begin position="354"/>
        <end position="369"/>
    </location>
</feature>
<feature type="transmembrane region" description="Helical" evidence="4">
    <location>
        <begin position="370"/>
        <end position="390"/>
    </location>
</feature>
<feature type="topological domain" description="Extracellular" evidence="2 4">
    <location>
        <begin position="391"/>
        <end position="411"/>
    </location>
</feature>
<feature type="transmembrane region" description="Helical" evidence="4">
    <location>
        <begin position="412"/>
        <end position="432"/>
    </location>
</feature>
<feature type="topological domain" description="Cytoplasmic" evidence="2 4">
    <location>
        <begin position="433"/>
        <end position="453"/>
    </location>
</feature>
<feature type="transmembrane region" description="Helical" evidence="4">
    <location>
        <begin position="454"/>
        <end position="474"/>
    </location>
</feature>
<feature type="topological domain" description="Extracellular" evidence="4">
    <location>
        <begin position="475"/>
        <end position="476"/>
    </location>
</feature>
<feature type="transmembrane region" description="Helical" evidence="4">
    <location>
        <begin position="477"/>
        <end position="497"/>
    </location>
</feature>
<feature type="topological domain" description="Cytoplasmic" evidence="2 4">
    <location>
        <begin position="498"/>
        <end position="514"/>
    </location>
</feature>
<feature type="transmembrane region" description="Helical" evidence="4">
    <location>
        <begin position="515"/>
        <end position="535"/>
    </location>
</feature>
<feature type="topological domain" description="Extracellular" evidence="2 4">
    <location>
        <begin position="536"/>
        <end position="547"/>
    </location>
</feature>
<feature type="region of interest" description="Disordered" evidence="5">
    <location>
        <begin position="1"/>
        <end position="26"/>
    </location>
</feature>
<feature type="site" description="Influences on amino acid transport capacity" evidence="1">
    <location>
        <position position="232"/>
    </location>
</feature>
<feature type="modified residue" description="Phosphoserine" evidence="3">
    <location>
        <position position="49"/>
    </location>
</feature>
<feature type="glycosylation site" description="N-linked (GlcNAc...) asparagine" evidence="4">
    <location>
        <position position="260"/>
    </location>
</feature>
<feature type="glycosylation site" description="N-linked (GlcNAc...) asparagine" evidence="4">
    <location>
        <position position="264"/>
    </location>
</feature>
<feature type="glycosylation site" description="N-linked (GlcNAc...) asparagine" evidence="4">
    <location>
        <position position="276"/>
    </location>
</feature>
<feature type="disulfide bond" evidence="1">
    <location>
        <begin position="249"/>
        <end position="321"/>
    </location>
</feature>
<accession>Q5RE87</accession>
<organism>
    <name type="scientific">Pongo abelii</name>
    <name type="common">Sumatran orangutan</name>
    <name type="synonym">Pongo pygmaeus abelii</name>
    <dbReference type="NCBI Taxonomy" id="9601"/>
    <lineage>
        <taxon>Eukaryota</taxon>
        <taxon>Metazoa</taxon>
        <taxon>Chordata</taxon>
        <taxon>Craniata</taxon>
        <taxon>Vertebrata</taxon>
        <taxon>Euteleostomi</taxon>
        <taxon>Mammalia</taxon>
        <taxon>Eutheria</taxon>
        <taxon>Euarchontoglires</taxon>
        <taxon>Primates</taxon>
        <taxon>Haplorrhini</taxon>
        <taxon>Catarrhini</taxon>
        <taxon>Hominidae</taxon>
        <taxon>Pongo</taxon>
    </lineage>
</organism>
<proteinExistence type="evidence at transcript level"/>
<gene>
    <name evidence="2" type="primary">SLC38A4</name>
    <name type="synonym">ATA3</name>
    <name type="synonym">SNAT4</name>
</gene>